<proteinExistence type="inferred from homology"/>
<sequence>MQQLQNVIETAFERRADITPANVDTVTREAITHVIDLLDTGALRVAEKIDGQWVTHQWLKKAVLLSFRINDNQVMEGAETRYYDKVPMKFAGYDEARFQREGFRVVPPATVRKGAFIARNTVLMPSYVNIGAFVDEGTMVDTWATVGSCAQIGKNVHLSGGVGIGGVLEPLQANPTIIEDNCFVGARSEVVEGVIVEEGSVISMGVFIGQSTRIYDRETGEVHYGRVPAGSVVVSGNLPSKDGSYSLYCAVIVKKVDAKTRSKVGINELLRTID</sequence>
<gene>
    <name evidence="1" type="primary">dapD</name>
    <name type="ordered locus">YPA_0515</name>
</gene>
<feature type="chain" id="PRO_1000047199" description="2,3,4,5-tetrahydropyridine-2,6-dicarboxylate N-succinyltransferase">
    <location>
        <begin position="1"/>
        <end position="274"/>
    </location>
</feature>
<feature type="binding site" evidence="1">
    <location>
        <position position="104"/>
    </location>
    <ligand>
        <name>substrate</name>
    </ligand>
</feature>
<feature type="binding site" evidence="1">
    <location>
        <position position="141"/>
    </location>
    <ligand>
        <name>substrate</name>
    </ligand>
</feature>
<organism>
    <name type="scientific">Yersinia pestis bv. Antiqua (strain Antiqua)</name>
    <dbReference type="NCBI Taxonomy" id="360102"/>
    <lineage>
        <taxon>Bacteria</taxon>
        <taxon>Pseudomonadati</taxon>
        <taxon>Pseudomonadota</taxon>
        <taxon>Gammaproteobacteria</taxon>
        <taxon>Enterobacterales</taxon>
        <taxon>Yersiniaceae</taxon>
        <taxon>Yersinia</taxon>
    </lineage>
</organism>
<comment type="catalytic activity">
    <reaction evidence="1">
        <text>(S)-2,3,4,5-tetrahydrodipicolinate + succinyl-CoA + H2O = (S)-2-succinylamino-6-oxoheptanedioate + CoA</text>
        <dbReference type="Rhea" id="RHEA:17325"/>
        <dbReference type="ChEBI" id="CHEBI:15377"/>
        <dbReference type="ChEBI" id="CHEBI:15685"/>
        <dbReference type="ChEBI" id="CHEBI:16845"/>
        <dbReference type="ChEBI" id="CHEBI:57287"/>
        <dbReference type="ChEBI" id="CHEBI:57292"/>
        <dbReference type="EC" id="2.3.1.117"/>
    </reaction>
</comment>
<comment type="pathway">
    <text evidence="1">Amino-acid biosynthesis; L-lysine biosynthesis via DAP pathway; LL-2,6-diaminopimelate from (S)-tetrahydrodipicolinate (succinylase route): step 1/3.</text>
</comment>
<comment type="subunit">
    <text evidence="1">Homotrimer.</text>
</comment>
<comment type="subcellular location">
    <subcellularLocation>
        <location evidence="1">Cytoplasm</location>
    </subcellularLocation>
</comment>
<comment type="similarity">
    <text evidence="1">Belongs to the transferase hexapeptide repeat family.</text>
</comment>
<protein>
    <recommendedName>
        <fullName evidence="1">2,3,4,5-tetrahydropyridine-2,6-dicarboxylate N-succinyltransferase</fullName>
        <ecNumber evidence="1">2.3.1.117</ecNumber>
    </recommendedName>
    <alternativeName>
        <fullName evidence="1">Tetrahydrodipicolinate N-succinyltransferase</fullName>
        <shortName evidence="1">THDP succinyltransferase</shortName>
        <shortName evidence="1">THP succinyltransferase</shortName>
        <shortName evidence="1">Tetrahydropicolinate succinylase</shortName>
    </alternativeName>
</protein>
<reference key="1">
    <citation type="journal article" date="2006" name="J. Bacteriol.">
        <title>Complete genome sequence of Yersinia pestis strains Antiqua and Nepal516: evidence of gene reduction in an emerging pathogen.</title>
        <authorList>
            <person name="Chain P.S.G."/>
            <person name="Hu P."/>
            <person name="Malfatti S.A."/>
            <person name="Radnedge L."/>
            <person name="Larimer F."/>
            <person name="Vergez L.M."/>
            <person name="Worsham P."/>
            <person name="Chu M.C."/>
            <person name="Andersen G.L."/>
        </authorList>
    </citation>
    <scope>NUCLEOTIDE SEQUENCE [LARGE SCALE GENOMIC DNA]</scope>
    <source>
        <strain>Antiqua</strain>
    </source>
</reference>
<accession>Q1CAN9</accession>
<keyword id="KW-0012">Acyltransferase</keyword>
<keyword id="KW-0028">Amino-acid biosynthesis</keyword>
<keyword id="KW-0963">Cytoplasm</keyword>
<keyword id="KW-0220">Diaminopimelate biosynthesis</keyword>
<keyword id="KW-0457">Lysine biosynthesis</keyword>
<keyword id="KW-0677">Repeat</keyword>
<keyword id="KW-0808">Transferase</keyword>
<evidence type="ECO:0000255" key="1">
    <source>
        <dbReference type="HAMAP-Rule" id="MF_00811"/>
    </source>
</evidence>
<name>DAPD_YERPA</name>
<dbReference type="EC" id="2.3.1.117" evidence="1"/>
<dbReference type="EMBL" id="CP000308">
    <property type="protein sequence ID" value="ABG12483.1"/>
    <property type="molecule type" value="Genomic_DNA"/>
</dbReference>
<dbReference type="RefSeq" id="WP_002212128.1">
    <property type="nucleotide sequence ID" value="NZ_CP009906.1"/>
</dbReference>
<dbReference type="SMR" id="Q1CAN9"/>
<dbReference type="GeneID" id="96662373"/>
<dbReference type="KEGG" id="ypa:YPA_0515"/>
<dbReference type="UniPathway" id="UPA00034">
    <property type="reaction ID" value="UER00019"/>
</dbReference>
<dbReference type="Proteomes" id="UP000001971">
    <property type="component" value="Chromosome"/>
</dbReference>
<dbReference type="GO" id="GO:0005737">
    <property type="term" value="C:cytoplasm"/>
    <property type="evidence" value="ECO:0007669"/>
    <property type="project" value="UniProtKB-SubCell"/>
</dbReference>
<dbReference type="GO" id="GO:0008666">
    <property type="term" value="F:2,3,4,5-tetrahydropyridine-2,6-dicarboxylate N-succinyltransferase activity"/>
    <property type="evidence" value="ECO:0007669"/>
    <property type="project" value="UniProtKB-UniRule"/>
</dbReference>
<dbReference type="GO" id="GO:0016779">
    <property type="term" value="F:nucleotidyltransferase activity"/>
    <property type="evidence" value="ECO:0007669"/>
    <property type="project" value="TreeGrafter"/>
</dbReference>
<dbReference type="GO" id="GO:0019877">
    <property type="term" value="P:diaminopimelate biosynthetic process"/>
    <property type="evidence" value="ECO:0007669"/>
    <property type="project" value="UniProtKB-UniRule"/>
</dbReference>
<dbReference type="GO" id="GO:0009089">
    <property type="term" value="P:lysine biosynthetic process via diaminopimelate"/>
    <property type="evidence" value="ECO:0007669"/>
    <property type="project" value="UniProtKB-UniRule"/>
</dbReference>
<dbReference type="CDD" id="cd03350">
    <property type="entry name" value="LbH_THP_succinylT"/>
    <property type="match status" value="1"/>
</dbReference>
<dbReference type="FunFam" id="2.160.10.10:FF:000004">
    <property type="entry name" value="2,3,4,5-tetrahydropyridine-2,6-dicarboxylate N-succinyltransferase"/>
    <property type="match status" value="1"/>
</dbReference>
<dbReference type="Gene3D" id="2.160.10.10">
    <property type="entry name" value="Hexapeptide repeat proteins"/>
    <property type="match status" value="1"/>
</dbReference>
<dbReference type="Gene3D" id="1.10.166.10">
    <property type="entry name" value="Tetrahydrodipicolinate-N-succinyltransferase, N-terminal domain"/>
    <property type="match status" value="1"/>
</dbReference>
<dbReference type="HAMAP" id="MF_00811">
    <property type="entry name" value="DapD"/>
    <property type="match status" value="1"/>
</dbReference>
<dbReference type="InterPro" id="IPR005664">
    <property type="entry name" value="DapD_Trfase_Hexpep_rpt_fam"/>
</dbReference>
<dbReference type="InterPro" id="IPR001451">
    <property type="entry name" value="Hexapep"/>
</dbReference>
<dbReference type="InterPro" id="IPR018357">
    <property type="entry name" value="Hexapep_transf_CS"/>
</dbReference>
<dbReference type="InterPro" id="IPR023180">
    <property type="entry name" value="THP_succinylTrfase_dom1"/>
</dbReference>
<dbReference type="InterPro" id="IPR037133">
    <property type="entry name" value="THP_succinylTrfase_N_sf"/>
</dbReference>
<dbReference type="InterPro" id="IPR011004">
    <property type="entry name" value="Trimer_LpxA-like_sf"/>
</dbReference>
<dbReference type="NCBIfam" id="TIGR00965">
    <property type="entry name" value="dapD"/>
    <property type="match status" value="1"/>
</dbReference>
<dbReference type="NCBIfam" id="NF008808">
    <property type="entry name" value="PRK11830.1"/>
    <property type="match status" value="1"/>
</dbReference>
<dbReference type="PANTHER" id="PTHR19136:SF52">
    <property type="entry name" value="2,3,4,5-TETRAHYDROPYRIDINE-2,6-DICARBOXYLATE N-SUCCINYLTRANSFERASE"/>
    <property type="match status" value="1"/>
</dbReference>
<dbReference type="PANTHER" id="PTHR19136">
    <property type="entry name" value="MOLYBDENUM COFACTOR GUANYLYLTRANSFERASE"/>
    <property type="match status" value="1"/>
</dbReference>
<dbReference type="Pfam" id="PF14602">
    <property type="entry name" value="Hexapep_2"/>
    <property type="match status" value="1"/>
</dbReference>
<dbReference type="Pfam" id="PF14805">
    <property type="entry name" value="THDPS_N_2"/>
    <property type="match status" value="1"/>
</dbReference>
<dbReference type="SUPFAM" id="SSF51161">
    <property type="entry name" value="Trimeric LpxA-like enzymes"/>
    <property type="match status" value="1"/>
</dbReference>
<dbReference type="PROSITE" id="PS00101">
    <property type="entry name" value="HEXAPEP_TRANSFERASES"/>
    <property type="match status" value="1"/>
</dbReference>